<organism>
    <name type="scientific">Clostridium botulinum (strain Kyoto / Type A2)</name>
    <dbReference type="NCBI Taxonomy" id="536232"/>
    <lineage>
        <taxon>Bacteria</taxon>
        <taxon>Bacillati</taxon>
        <taxon>Bacillota</taxon>
        <taxon>Clostridia</taxon>
        <taxon>Eubacteriales</taxon>
        <taxon>Clostridiaceae</taxon>
        <taxon>Clostridium</taxon>
    </lineage>
</organism>
<name>ENO_CLOBJ</name>
<proteinExistence type="inferred from homology"/>
<reference key="1">
    <citation type="submission" date="2008-10" db="EMBL/GenBank/DDBJ databases">
        <title>Genome sequence of Clostridium botulinum A2 Kyoto.</title>
        <authorList>
            <person name="Shrivastava S."/>
            <person name="Brinkac L.M."/>
            <person name="Brown J.L."/>
            <person name="Bruce D."/>
            <person name="Detter C.C."/>
            <person name="Johnson E.A."/>
            <person name="Munk C.A."/>
            <person name="Smith L.A."/>
            <person name="Smith T.J."/>
            <person name="Sutton G."/>
            <person name="Brettin T.S."/>
        </authorList>
    </citation>
    <scope>NUCLEOTIDE SEQUENCE [LARGE SCALE GENOMIC DNA]</scope>
    <source>
        <strain>Kyoto / Type A2</strain>
    </source>
</reference>
<accession>C1FQW6</accession>
<evidence type="ECO:0000255" key="1">
    <source>
        <dbReference type="HAMAP-Rule" id="MF_00318"/>
    </source>
</evidence>
<comment type="function">
    <text evidence="1">Catalyzes the reversible conversion of 2-phosphoglycerate (2-PG) into phosphoenolpyruvate (PEP). It is essential for the degradation of carbohydrates via glycolysis.</text>
</comment>
<comment type="catalytic activity">
    <reaction evidence="1">
        <text>(2R)-2-phosphoglycerate = phosphoenolpyruvate + H2O</text>
        <dbReference type="Rhea" id="RHEA:10164"/>
        <dbReference type="ChEBI" id="CHEBI:15377"/>
        <dbReference type="ChEBI" id="CHEBI:58289"/>
        <dbReference type="ChEBI" id="CHEBI:58702"/>
        <dbReference type="EC" id="4.2.1.11"/>
    </reaction>
</comment>
<comment type="cofactor">
    <cofactor evidence="1">
        <name>Mg(2+)</name>
        <dbReference type="ChEBI" id="CHEBI:18420"/>
    </cofactor>
    <text evidence="1">Binds a second Mg(2+) ion via substrate during catalysis.</text>
</comment>
<comment type="pathway">
    <text evidence="1">Carbohydrate degradation; glycolysis; pyruvate from D-glyceraldehyde 3-phosphate: step 4/5.</text>
</comment>
<comment type="subcellular location">
    <subcellularLocation>
        <location evidence="1">Cytoplasm</location>
    </subcellularLocation>
    <subcellularLocation>
        <location evidence="1">Secreted</location>
    </subcellularLocation>
    <subcellularLocation>
        <location evidence="1">Cell surface</location>
    </subcellularLocation>
    <text evidence="1">Fractions of enolase are present in both the cytoplasm and on the cell surface.</text>
</comment>
<comment type="similarity">
    <text evidence="1">Belongs to the enolase family.</text>
</comment>
<protein>
    <recommendedName>
        <fullName evidence="1">Enolase</fullName>
        <ecNumber evidence="1">4.2.1.11</ecNumber>
    </recommendedName>
    <alternativeName>
        <fullName evidence="1">2-phospho-D-glycerate hydro-lyase</fullName>
    </alternativeName>
    <alternativeName>
        <fullName evidence="1">2-phosphoglycerate dehydratase</fullName>
    </alternativeName>
</protein>
<keyword id="KW-0963">Cytoplasm</keyword>
<keyword id="KW-0324">Glycolysis</keyword>
<keyword id="KW-0456">Lyase</keyword>
<keyword id="KW-0460">Magnesium</keyword>
<keyword id="KW-0479">Metal-binding</keyword>
<keyword id="KW-0964">Secreted</keyword>
<gene>
    <name evidence="1" type="primary">eno</name>
    <name type="ordered locus">CLM_0280</name>
</gene>
<dbReference type="EC" id="4.2.1.11" evidence="1"/>
<dbReference type="EMBL" id="CP001581">
    <property type="protein sequence ID" value="ACO84051.1"/>
    <property type="molecule type" value="Genomic_DNA"/>
</dbReference>
<dbReference type="RefSeq" id="WP_003356714.1">
    <property type="nucleotide sequence ID" value="NC_012563.1"/>
</dbReference>
<dbReference type="SMR" id="C1FQW6"/>
<dbReference type="GeneID" id="92937028"/>
<dbReference type="KEGG" id="cby:CLM_0280"/>
<dbReference type="eggNOG" id="COG0148">
    <property type="taxonomic scope" value="Bacteria"/>
</dbReference>
<dbReference type="HOGENOM" id="CLU_031223_2_1_9"/>
<dbReference type="UniPathway" id="UPA00109">
    <property type="reaction ID" value="UER00187"/>
</dbReference>
<dbReference type="Proteomes" id="UP000001374">
    <property type="component" value="Chromosome"/>
</dbReference>
<dbReference type="GO" id="GO:0009986">
    <property type="term" value="C:cell surface"/>
    <property type="evidence" value="ECO:0007669"/>
    <property type="project" value="UniProtKB-SubCell"/>
</dbReference>
<dbReference type="GO" id="GO:0005576">
    <property type="term" value="C:extracellular region"/>
    <property type="evidence" value="ECO:0007669"/>
    <property type="project" value="UniProtKB-SubCell"/>
</dbReference>
<dbReference type="GO" id="GO:0000015">
    <property type="term" value="C:phosphopyruvate hydratase complex"/>
    <property type="evidence" value="ECO:0007669"/>
    <property type="project" value="InterPro"/>
</dbReference>
<dbReference type="GO" id="GO:0000287">
    <property type="term" value="F:magnesium ion binding"/>
    <property type="evidence" value="ECO:0007669"/>
    <property type="project" value="UniProtKB-UniRule"/>
</dbReference>
<dbReference type="GO" id="GO:0004634">
    <property type="term" value="F:phosphopyruvate hydratase activity"/>
    <property type="evidence" value="ECO:0007669"/>
    <property type="project" value="UniProtKB-UniRule"/>
</dbReference>
<dbReference type="GO" id="GO:0006096">
    <property type="term" value="P:glycolytic process"/>
    <property type="evidence" value="ECO:0007669"/>
    <property type="project" value="UniProtKB-UniRule"/>
</dbReference>
<dbReference type="CDD" id="cd03313">
    <property type="entry name" value="enolase"/>
    <property type="match status" value="1"/>
</dbReference>
<dbReference type="FunFam" id="3.20.20.120:FF:000001">
    <property type="entry name" value="Enolase"/>
    <property type="match status" value="1"/>
</dbReference>
<dbReference type="FunFam" id="3.30.390.10:FF:000001">
    <property type="entry name" value="Enolase"/>
    <property type="match status" value="1"/>
</dbReference>
<dbReference type="Gene3D" id="3.20.20.120">
    <property type="entry name" value="Enolase-like C-terminal domain"/>
    <property type="match status" value="1"/>
</dbReference>
<dbReference type="Gene3D" id="3.30.390.10">
    <property type="entry name" value="Enolase-like, N-terminal domain"/>
    <property type="match status" value="1"/>
</dbReference>
<dbReference type="HAMAP" id="MF_00318">
    <property type="entry name" value="Enolase"/>
    <property type="match status" value="1"/>
</dbReference>
<dbReference type="InterPro" id="IPR000941">
    <property type="entry name" value="Enolase"/>
</dbReference>
<dbReference type="InterPro" id="IPR036849">
    <property type="entry name" value="Enolase-like_C_sf"/>
</dbReference>
<dbReference type="InterPro" id="IPR029017">
    <property type="entry name" value="Enolase-like_N"/>
</dbReference>
<dbReference type="InterPro" id="IPR020810">
    <property type="entry name" value="Enolase_C"/>
</dbReference>
<dbReference type="InterPro" id="IPR020809">
    <property type="entry name" value="Enolase_CS"/>
</dbReference>
<dbReference type="InterPro" id="IPR020811">
    <property type="entry name" value="Enolase_N"/>
</dbReference>
<dbReference type="NCBIfam" id="TIGR01060">
    <property type="entry name" value="eno"/>
    <property type="match status" value="1"/>
</dbReference>
<dbReference type="PANTHER" id="PTHR11902">
    <property type="entry name" value="ENOLASE"/>
    <property type="match status" value="1"/>
</dbReference>
<dbReference type="PANTHER" id="PTHR11902:SF1">
    <property type="entry name" value="ENOLASE"/>
    <property type="match status" value="1"/>
</dbReference>
<dbReference type="Pfam" id="PF00113">
    <property type="entry name" value="Enolase_C"/>
    <property type="match status" value="1"/>
</dbReference>
<dbReference type="Pfam" id="PF03952">
    <property type="entry name" value="Enolase_N"/>
    <property type="match status" value="1"/>
</dbReference>
<dbReference type="PIRSF" id="PIRSF001400">
    <property type="entry name" value="Enolase"/>
    <property type="match status" value="1"/>
</dbReference>
<dbReference type="PRINTS" id="PR00148">
    <property type="entry name" value="ENOLASE"/>
</dbReference>
<dbReference type="SFLD" id="SFLDS00001">
    <property type="entry name" value="Enolase"/>
    <property type="match status" value="1"/>
</dbReference>
<dbReference type="SFLD" id="SFLDF00002">
    <property type="entry name" value="enolase"/>
    <property type="match status" value="1"/>
</dbReference>
<dbReference type="SMART" id="SM01192">
    <property type="entry name" value="Enolase_C"/>
    <property type="match status" value="1"/>
</dbReference>
<dbReference type="SMART" id="SM01193">
    <property type="entry name" value="Enolase_N"/>
    <property type="match status" value="1"/>
</dbReference>
<dbReference type="SUPFAM" id="SSF51604">
    <property type="entry name" value="Enolase C-terminal domain-like"/>
    <property type="match status" value="1"/>
</dbReference>
<dbReference type="SUPFAM" id="SSF54826">
    <property type="entry name" value="Enolase N-terminal domain-like"/>
    <property type="match status" value="1"/>
</dbReference>
<dbReference type="PROSITE" id="PS00164">
    <property type="entry name" value="ENOLASE"/>
    <property type="match status" value="1"/>
</dbReference>
<feature type="chain" id="PRO_1000132994" description="Enolase">
    <location>
        <begin position="1"/>
        <end position="431"/>
    </location>
</feature>
<feature type="active site" description="Proton donor" evidence="1">
    <location>
        <position position="208"/>
    </location>
</feature>
<feature type="active site" description="Proton acceptor" evidence="1">
    <location>
        <position position="340"/>
    </location>
</feature>
<feature type="binding site" evidence="1">
    <location>
        <position position="166"/>
    </location>
    <ligand>
        <name>(2R)-2-phosphoglycerate</name>
        <dbReference type="ChEBI" id="CHEBI:58289"/>
    </ligand>
</feature>
<feature type="binding site" evidence="1">
    <location>
        <position position="245"/>
    </location>
    <ligand>
        <name>Mg(2+)</name>
        <dbReference type="ChEBI" id="CHEBI:18420"/>
    </ligand>
</feature>
<feature type="binding site" evidence="1">
    <location>
        <position position="288"/>
    </location>
    <ligand>
        <name>Mg(2+)</name>
        <dbReference type="ChEBI" id="CHEBI:18420"/>
    </ligand>
</feature>
<feature type="binding site" evidence="1">
    <location>
        <position position="315"/>
    </location>
    <ligand>
        <name>Mg(2+)</name>
        <dbReference type="ChEBI" id="CHEBI:18420"/>
    </ligand>
</feature>
<feature type="binding site" evidence="1">
    <location>
        <position position="340"/>
    </location>
    <ligand>
        <name>(2R)-2-phosphoglycerate</name>
        <dbReference type="ChEBI" id="CHEBI:58289"/>
    </ligand>
</feature>
<feature type="binding site" evidence="1">
    <location>
        <position position="369"/>
    </location>
    <ligand>
        <name>(2R)-2-phosphoglycerate</name>
        <dbReference type="ChEBI" id="CHEBI:58289"/>
    </ligand>
</feature>
<feature type="binding site" evidence="1">
    <location>
        <position position="370"/>
    </location>
    <ligand>
        <name>(2R)-2-phosphoglycerate</name>
        <dbReference type="ChEBI" id="CHEBI:58289"/>
    </ligand>
</feature>
<feature type="binding site" evidence="1">
    <location>
        <position position="391"/>
    </location>
    <ligand>
        <name>(2R)-2-phosphoglycerate</name>
        <dbReference type="ChEBI" id="CHEBI:58289"/>
    </ligand>
</feature>
<sequence length="431" mass="46393">MKNYIEIVDVYARQILDSRCNPTVEVEVELEDGTVGVAAVPSGASTGAFEAVELRDGDKSQYLGKGVLKAVDNVNTTIADELVGMNVLDQVAIDKTMIELDGTDNKAKLGANAMLGVSLACAKAAANSLGMSLYQYIGGVNGKVLPVPMMNIINGGKHADNNVDLQEFMIMPAGAPSFSEALRMCSEVYHALKSTLKAQGYDTGVGDEGGFAPNLKSNEEAIVVIIEAIKKAGYTPGKDIFIALDPASSEIFEDGKYNLAGEGRVLTPEEMANYYVELAEKYPIISIEDGMAEEDWDGWKILTEKIGNKVQLVGDDLFVTNTERLSKGIKLGVANSILIKLNQIGTLTETLNAIEMAERAGYTAVVSHRSGETEDTTIADLVVAVNAGQIKTGAPARSERVAKYNQLLRIEEELNDMGEYRGLKAFYNINK</sequence>